<reference key="1">
    <citation type="submission" date="2007-04" db="EMBL/GenBank/DDBJ databases">
        <title>Complete sequence of Shewanella putrefaciens CN-32.</title>
        <authorList>
            <consortium name="US DOE Joint Genome Institute"/>
            <person name="Copeland A."/>
            <person name="Lucas S."/>
            <person name="Lapidus A."/>
            <person name="Barry K."/>
            <person name="Detter J.C."/>
            <person name="Glavina del Rio T."/>
            <person name="Hammon N."/>
            <person name="Israni S."/>
            <person name="Dalin E."/>
            <person name="Tice H."/>
            <person name="Pitluck S."/>
            <person name="Chain P."/>
            <person name="Malfatti S."/>
            <person name="Shin M."/>
            <person name="Vergez L."/>
            <person name="Schmutz J."/>
            <person name="Larimer F."/>
            <person name="Land M."/>
            <person name="Hauser L."/>
            <person name="Kyrpides N."/>
            <person name="Mikhailova N."/>
            <person name="Romine M.F."/>
            <person name="Fredrickson J."/>
            <person name="Tiedje J."/>
            <person name="Richardson P."/>
        </authorList>
    </citation>
    <scope>NUCLEOTIDE SEQUENCE [LARGE SCALE GENOMIC DNA]</scope>
    <source>
        <strain>CN-32 / ATCC BAA-453</strain>
    </source>
</reference>
<comment type="function">
    <text evidence="1">RNA chaperone that binds small regulatory RNA (sRNAs) and mRNAs to facilitate mRNA translational regulation in response to envelope stress, environmental stress and changes in metabolite concentrations. Also binds with high specificity to tRNAs.</text>
</comment>
<comment type="subunit">
    <text evidence="1">Homohexamer.</text>
</comment>
<comment type="similarity">
    <text evidence="1">Belongs to the Hfq family.</text>
</comment>
<accession>A4YAK9</accession>
<keyword id="KW-0694">RNA-binding</keyword>
<keyword id="KW-0346">Stress response</keyword>
<sequence>MAKGQSLQDPFLNALRRERVPVSIYLVNGIKLQGQVESFDQFVILLKNTVSQMVYKHAISTVVPARPFNVTGHQNAQGGYGPQDDVPSGE</sequence>
<name>HFQ_SHEPC</name>
<dbReference type="EMBL" id="CP000681">
    <property type="protein sequence ID" value="ABP76992.1"/>
    <property type="molecule type" value="Genomic_DNA"/>
</dbReference>
<dbReference type="SMR" id="A4YAK9"/>
<dbReference type="STRING" id="319224.Sputcn32_3280"/>
<dbReference type="KEGG" id="spc:Sputcn32_3280"/>
<dbReference type="eggNOG" id="COG1923">
    <property type="taxonomic scope" value="Bacteria"/>
</dbReference>
<dbReference type="HOGENOM" id="CLU_113688_2_2_6"/>
<dbReference type="GO" id="GO:0005829">
    <property type="term" value="C:cytosol"/>
    <property type="evidence" value="ECO:0007669"/>
    <property type="project" value="TreeGrafter"/>
</dbReference>
<dbReference type="GO" id="GO:0003723">
    <property type="term" value="F:RNA binding"/>
    <property type="evidence" value="ECO:0007669"/>
    <property type="project" value="UniProtKB-UniRule"/>
</dbReference>
<dbReference type="GO" id="GO:0006355">
    <property type="term" value="P:regulation of DNA-templated transcription"/>
    <property type="evidence" value="ECO:0007669"/>
    <property type="project" value="InterPro"/>
</dbReference>
<dbReference type="GO" id="GO:0043487">
    <property type="term" value="P:regulation of RNA stability"/>
    <property type="evidence" value="ECO:0007669"/>
    <property type="project" value="TreeGrafter"/>
</dbReference>
<dbReference type="GO" id="GO:0045974">
    <property type="term" value="P:regulation of translation, ncRNA-mediated"/>
    <property type="evidence" value="ECO:0007669"/>
    <property type="project" value="TreeGrafter"/>
</dbReference>
<dbReference type="CDD" id="cd01716">
    <property type="entry name" value="Hfq"/>
    <property type="match status" value="1"/>
</dbReference>
<dbReference type="FunFam" id="2.30.30.100:FF:000001">
    <property type="entry name" value="RNA-binding protein Hfq"/>
    <property type="match status" value="1"/>
</dbReference>
<dbReference type="Gene3D" id="2.30.30.100">
    <property type="match status" value="1"/>
</dbReference>
<dbReference type="HAMAP" id="MF_00436">
    <property type="entry name" value="Hfq"/>
    <property type="match status" value="1"/>
</dbReference>
<dbReference type="InterPro" id="IPR005001">
    <property type="entry name" value="Hfq"/>
</dbReference>
<dbReference type="InterPro" id="IPR010920">
    <property type="entry name" value="LSM_dom_sf"/>
</dbReference>
<dbReference type="InterPro" id="IPR047575">
    <property type="entry name" value="Sm"/>
</dbReference>
<dbReference type="NCBIfam" id="TIGR02383">
    <property type="entry name" value="Hfq"/>
    <property type="match status" value="1"/>
</dbReference>
<dbReference type="NCBIfam" id="NF001602">
    <property type="entry name" value="PRK00395.1"/>
    <property type="match status" value="1"/>
</dbReference>
<dbReference type="PANTHER" id="PTHR34772">
    <property type="entry name" value="RNA-BINDING PROTEIN HFQ"/>
    <property type="match status" value="1"/>
</dbReference>
<dbReference type="PANTHER" id="PTHR34772:SF1">
    <property type="entry name" value="RNA-BINDING PROTEIN HFQ"/>
    <property type="match status" value="1"/>
</dbReference>
<dbReference type="Pfam" id="PF17209">
    <property type="entry name" value="Hfq"/>
    <property type="match status" value="1"/>
</dbReference>
<dbReference type="SUPFAM" id="SSF50182">
    <property type="entry name" value="Sm-like ribonucleoproteins"/>
    <property type="match status" value="1"/>
</dbReference>
<dbReference type="PROSITE" id="PS52002">
    <property type="entry name" value="SM"/>
    <property type="match status" value="1"/>
</dbReference>
<feature type="chain" id="PRO_1000025936" description="RNA-binding protein Hfq">
    <location>
        <begin position="1"/>
        <end position="90"/>
    </location>
</feature>
<feature type="domain" description="Sm" evidence="2">
    <location>
        <begin position="9"/>
        <end position="68"/>
    </location>
</feature>
<feature type="region of interest" description="Disordered" evidence="3">
    <location>
        <begin position="71"/>
        <end position="90"/>
    </location>
</feature>
<gene>
    <name evidence="1" type="primary">hfq</name>
    <name type="ordered locus">Sputcn32_3280</name>
</gene>
<organism>
    <name type="scientific">Shewanella putrefaciens (strain CN-32 / ATCC BAA-453)</name>
    <dbReference type="NCBI Taxonomy" id="319224"/>
    <lineage>
        <taxon>Bacteria</taxon>
        <taxon>Pseudomonadati</taxon>
        <taxon>Pseudomonadota</taxon>
        <taxon>Gammaproteobacteria</taxon>
        <taxon>Alteromonadales</taxon>
        <taxon>Shewanellaceae</taxon>
        <taxon>Shewanella</taxon>
    </lineage>
</organism>
<evidence type="ECO:0000255" key="1">
    <source>
        <dbReference type="HAMAP-Rule" id="MF_00436"/>
    </source>
</evidence>
<evidence type="ECO:0000255" key="2">
    <source>
        <dbReference type="PROSITE-ProRule" id="PRU01346"/>
    </source>
</evidence>
<evidence type="ECO:0000256" key="3">
    <source>
        <dbReference type="SAM" id="MobiDB-lite"/>
    </source>
</evidence>
<protein>
    <recommendedName>
        <fullName evidence="1">RNA-binding protein Hfq</fullName>
    </recommendedName>
</protein>
<proteinExistence type="inferred from homology"/>